<reference key="1">
    <citation type="journal article" date="1995" name="J. Biol. Chem.">
        <title>Mutational analysis of photosystem I polypeptides in the cyanobacterium Synechocystis sp. PCC 6803. Targeted inactivation of psaI reveals the function of psaI in the structural organization of psaL.</title>
        <authorList>
            <person name="Xu Q."/>
            <person name="Hoppe D."/>
            <person name="Chitnis V.P."/>
            <person name="Odom W.R."/>
            <person name="Guikema J.A."/>
            <person name="Chitnis P.R."/>
        </authorList>
    </citation>
    <scope>NUCLEOTIDE SEQUENCE [GENOMIC DNA]</scope>
</reference>
<reference key="2">
    <citation type="journal article" date="1995" name="Plant Cell Physiol.">
        <title>Targeted inactivation of the gene psaI encoding a subunit of photosystem I of the cyanobacterium Synechocystis sp. PCC 6803.</title>
        <authorList>
            <person name="Nakamoto H."/>
        </authorList>
    </citation>
    <scope>NUCLEOTIDE SEQUENCE [GENOMIC DNA]</scope>
</reference>
<reference key="3">
    <citation type="journal article" date="1996" name="DNA Res.">
        <title>Sequence analysis of the genome of the unicellular cyanobacterium Synechocystis sp. strain PCC6803. II. Sequence determination of the entire genome and assignment of potential protein-coding regions.</title>
        <authorList>
            <person name="Kaneko T."/>
            <person name="Sato S."/>
            <person name="Kotani H."/>
            <person name="Tanaka A."/>
            <person name="Asamizu E."/>
            <person name="Nakamura Y."/>
            <person name="Miyajima N."/>
            <person name="Hirosawa M."/>
            <person name="Sugiura M."/>
            <person name="Sasamoto S."/>
            <person name="Kimura T."/>
            <person name="Hosouchi T."/>
            <person name="Matsuno A."/>
            <person name="Muraki A."/>
            <person name="Nakazaki N."/>
            <person name="Naruo K."/>
            <person name="Okumura S."/>
            <person name="Shimpo S."/>
            <person name="Takeuchi C."/>
            <person name="Wada T."/>
            <person name="Watanabe A."/>
            <person name="Yamada M."/>
            <person name="Yasuda M."/>
            <person name="Tabata S."/>
        </authorList>
    </citation>
    <scope>NUCLEOTIDE SEQUENCE [LARGE SCALE GENOMIC DNA]</scope>
    <source>
        <strain>ATCC 27184 / PCC 6803 / Kazusa</strain>
    </source>
</reference>
<keyword id="KW-0002">3D-structure</keyword>
<keyword id="KW-0472">Membrane</keyword>
<keyword id="KW-0602">Photosynthesis</keyword>
<keyword id="KW-0603">Photosystem I</keyword>
<keyword id="KW-1185">Reference proteome</keyword>
<keyword id="KW-0793">Thylakoid</keyword>
<keyword id="KW-0812">Transmembrane</keyword>
<keyword id="KW-1133">Transmembrane helix</keyword>
<organism>
    <name type="scientific">Synechocystis sp. (strain ATCC 27184 / PCC 6803 / Kazusa)</name>
    <dbReference type="NCBI Taxonomy" id="1111708"/>
    <lineage>
        <taxon>Bacteria</taxon>
        <taxon>Bacillati</taxon>
        <taxon>Cyanobacteriota</taxon>
        <taxon>Cyanophyceae</taxon>
        <taxon>Synechococcales</taxon>
        <taxon>Merismopediaceae</taxon>
        <taxon>Synechocystis</taxon>
    </lineage>
</organism>
<proteinExistence type="evidence at protein level"/>
<dbReference type="EMBL" id="L24773">
    <property type="protein sequence ID" value="AAA99435.1"/>
    <property type="molecule type" value="Genomic_DNA"/>
</dbReference>
<dbReference type="EMBL" id="D38131">
    <property type="protein sequence ID" value="BAA19609.1"/>
    <property type="molecule type" value="Genomic_DNA"/>
</dbReference>
<dbReference type="EMBL" id="BA000022">
    <property type="protein sequence ID" value="BAA18774.1"/>
    <property type="molecule type" value="Genomic_DNA"/>
</dbReference>
<dbReference type="PIR" id="A57482">
    <property type="entry name" value="A57482"/>
</dbReference>
<dbReference type="PDB" id="4L6V">
    <property type="method" value="X-ray"/>
    <property type="resolution" value="3.80 A"/>
    <property type="chains" value="9/I/i=1-40"/>
</dbReference>
<dbReference type="PDB" id="5OY0">
    <property type="method" value="X-ray"/>
    <property type="resolution" value="2.50 A"/>
    <property type="chains" value="I/i=1-40, h=1-38"/>
</dbReference>
<dbReference type="PDB" id="6HQB">
    <property type="method" value="X-ray"/>
    <property type="resolution" value="4.00 A"/>
    <property type="chains" value="I=1-40"/>
</dbReference>
<dbReference type="PDB" id="6NWA">
    <property type="method" value="EM"/>
    <property type="resolution" value="3.48 A"/>
    <property type="chains" value="I/R/i=1-40"/>
</dbReference>
<dbReference type="PDB" id="6UZV">
    <property type="method" value="EM"/>
    <property type="resolution" value="3.10 A"/>
    <property type="chains" value="I/h/i=1-40"/>
</dbReference>
<dbReference type="PDB" id="7UMH">
    <property type="method" value="EM"/>
    <property type="resolution" value="2.60 A"/>
    <property type="chains" value="I/R/i=1-40"/>
</dbReference>
<dbReference type="PDB" id="8AM5">
    <property type="method" value="EM"/>
    <property type="resolution" value="3.10 A"/>
    <property type="chains" value="i=1-40"/>
</dbReference>
<dbReference type="PDB" id="8ASL">
    <property type="method" value="EM"/>
    <property type="resolution" value="3.15 A"/>
    <property type="chains" value="i=1-40"/>
</dbReference>
<dbReference type="PDB" id="8ASP">
    <property type="method" value="EM"/>
    <property type="resolution" value="2.90 A"/>
    <property type="chains" value="i=1-40"/>
</dbReference>
<dbReference type="PDB" id="9AU4">
    <property type="method" value="EM"/>
    <property type="resolution" value="2.03 A"/>
    <property type="chains" value="I/R/i=1-40"/>
</dbReference>
<dbReference type="PDBsum" id="4L6V"/>
<dbReference type="PDBsum" id="5OY0"/>
<dbReference type="PDBsum" id="6HQB"/>
<dbReference type="PDBsum" id="6NWA"/>
<dbReference type="PDBsum" id="6UZV"/>
<dbReference type="PDBsum" id="7UMH"/>
<dbReference type="PDBsum" id="8AM5"/>
<dbReference type="PDBsum" id="8ASL"/>
<dbReference type="PDBsum" id="8ASP"/>
<dbReference type="PDBsum" id="9AU4"/>
<dbReference type="EMDB" id="EMD-0524"/>
<dbReference type="EMDB" id="EMD-15522"/>
<dbReference type="EMDB" id="EMD-15618"/>
<dbReference type="EMDB" id="EMD-15621"/>
<dbReference type="EMDB" id="EMD-20963"/>
<dbReference type="EMDB" id="EMD-26601"/>
<dbReference type="EMDB" id="EMD-43843"/>
<dbReference type="SMR" id="Q55330"/>
<dbReference type="IntAct" id="Q55330">
    <property type="interactions" value="4"/>
</dbReference>
<dbReference type="STRING" id="1148.gene:10500546"/>
<dbReference type="PaxDb" id="1148-1653864"/>
<dbReference type="EnsemblBacteria" id="BAA18774">
    <property type="protein sequence ID" value="BAA18774"/>
    <property type="gene ID" value="BAA18774"/>
</dbReference>
<dbReference type="KEGG" id="syn:smr0004"/>
<dbReference type="eggNOG" id="ENOG5033AVJ">
    <property type="taxonomic scope" value="Bacteria"/>
</dbReference>
<dbReference type="InParanoid" id="Q55330"/>
<dbReference type="BioCyc" id="MetaCyc:PSAI-MONOMER"/>
<dbReference type="Proteomes" id="UP000001425">
    <property type="component" value="Chromosome"/>
</dbReference>
<dbReference type="GO" id="GO:0009522">
    <property type="term" value="C:photosystem I"/>
    <property type="evidence" value="ECO:0007669"/>
    <property type="project" value="UniProtKB-KW"/>
</dbReference>
<dbReference type="GO" id="GO:0031676">
    <property type="term" value="C:plasma membrane-derived thylakoid membrane"/>
    <property type="evidence" value="ECO:0007669"/>
    <property type="project" value="UniProtKB-SubCell"/>
</dbReference>
<dbReference type="GO" id="GO:0015979">
    <property type="term" value="P:photosynthesis"/>
    <property type="evidence" value="ECO:0007669"/>
    <property type="project" value="UniProtKB-UniRule"/>
</dbReference>
<dbReference type="HAMAP" id="MF_00431">
    <property type="entry name" value="PSI_PsaI"/>
    <property type="match status" value="1"/>
</dbReference>
<dbReference type="InterPro" id="IPR001302">
    <property type="entry name" value="PSI_PsaI"/>
</dbReference>
<dbReference type="InterPro" id="IPR036357">
    <property type="entry name" value="PSI_PsaI_sf"/>
</dbReference>
<dbReference type="NCBIfam" id="NF008830">
    <property type="entry name" value="PRK11877.1"/>
    <property type="match status" value="1"/>
</dbReference>
<dbReference type="NCBIfam" id="TIGR03052">
    <property type="entry name" value="PS_I_psaI"/>
    <property type="match status" value="1"/>
</dbReference>
<dbReference type="PANTHER" id="PTHR35775">
    <property type="match status" value="1"/>
</dbReference>
<dbReference type="PANTHER" id="PTHR35775:SF2">
    <property type="entry name" value="PHOTOSYSTEM I REACTION CENTER SUBUNIT VIII"/>
    <property type="match status" value="1"/>
</dbReference>
<dbReference type="Pfam" id="PF00796">
    <property type="entry name" value="PSI_8"/>
    <property type="match status" value="1"/>
</dbReference>
<dbReference type="SUPFAM" id="SSF81540">
    <property type="entry name" value="Subunit VIII of photosystem I reaction centre, PsaI"/>
    <property type="match status" value="1"/>
</dbReference>
<feature type="chain" id="PRO_0000194685" description="Photosystem I reaction center subunit VIII">
    <location>
        <begin position="1"/>
        <end position="40"/>
    </location>
</feature>
<feature type="transmembrane region" description="Helical" evidence="2">
    <location>
        <begin position="12"/>
        <end position="32"/>
    </location>
</feature>
<feature type="turn" evidence="4">
    <location>
        <begin position="6"/>
        <end position="8"/>
    </location>
</feature>
<feature type="helix" evidence="4">
    <location>
        <begin position="9"/>
        <end position="19"/>
    </location>
</feature>
<feature type="helix" evidence="4">
    <location>
        <begin position="21"/>
        <end position="34"/>
    </location>
</feature>
<sequence>MDGSYAASYLPWILIPMVGWLFPAVTMGLLFIHIESEGEG</sequence>
<comment type="function">
    <text>May help in the organization of the PsaL subunit.</text>
</comment>
<comment type="subcellular location">
    <subcellularLocation>
        <location evidence="1">Cellular thylakoid membrane</location>
        <topology evidence="1">Single-pass membrane protein</topology>
    </subcellularLocation>
</comment>
<comment type="similarity">
    <text evidence="3">Belongs to the PsaI family.</text>
</comment>
<gene>
    <name type="primary">psaI</name>
    <name type="ordered locus">smr0004</name>
</gene>
<accession>Q55330</accession>
<name>PSAI_SYNY3</name>
<evidence type="ECO:0000250" key="1"/>
<evidence type="ECO:0000255" key="2"/>
<evidence type="ECO:0000305" key="3"/>
<evidence type="ECO:0007829" key="4">
    <source>
        <dbReference type="PDB" id="5OY0"/>
    </source>
</evidence>
<protein>
    <recommendedName>
        <fullName>Photosystem I reaction center subunit VIII</fullName>
    </recommendedName>
</protein>